<comment type="function">
    <text evidence="1">Catalyzes the sequential NAD-dependent oxidations of L-histidinol to L-histidinaldehyde and then to L-histidine.</text>
</comment>
<comment type="catalytic activity">
    <reaction evidence="1">
        <text>L-histidinol + 2 NAD(+) + H2O = L-histidine + 2 NADH + 3 H(+)</text>
        <dbReference type="Rhea" id="RHEA:20641"/>
        <dbReference type="ChEBI" id="CHEBI:15377"/>
        <dbReference type="ChEBI" id="CHEBI:15378"/>
        <dbReference type="ChEBI" id="CHEBI:57540"/>
        <dbReference type="ChEBI" id="CHEBI:57595"/>
        <dbReference type="ChEBI" id="CHEBI:57699"/>
        <dbReference type="ChEBI" id="CHEBI:57945"/>
        <dbReference type="EC" id="1.1.1.23"/>
    </reaction>
</comment>
<comment type="cofactor">
    <cofactor evidence="1">
        <name>Zn(2+)</name>
        <dbReference type="ChEBI" id="CHEBI:29105"/>
    </cofactor>
    <text evidence="1">Binds 1 zinc ion per subunit.</text>
</comment>
<comment type="pathway">
    <text evidence="1">Amino-acid biosynthesis; L-histidine biosynthesis; L-histidine from 5-phospho-alpha-D-ribose 1-diphosphate: step 9/9.</text>
</comment>
<comment type="similarity">
    <text evidence="1">Belongs to the histidinol dehydrogenase family.</text>
</comment>
<organism>
    <name type="scientific">Pasteurella multocida (strain Pm70)</name>
    <dbReference type="NCBI Taxonomy" id="272843"/>
    <lineage>
        <taxon>Bacteria</taxon>
        <taxon>Pseudomonadati</taxon>
        <taxon>Pseudomonadota</taxon>
        <taxon>Gammaproteobacteria</taxon>
        <taxon>Pasteurellales</taxon>
        <taxon>Pasteurellaceae</taxon>
        <taxon>Pasteurella</taxon>
    </lineage>
</organism>
<gene>
    <name evidence="1" type="primary">hisD</name>
    <name type="ordered locus">PM1198</name>
</gene>
<accession>Q9CLM4</accession>
<name>HISX_PASMU</name>
<reference key="1">
    <citation type="journal article" date="2001" name="Proc. Natl. Acad. Sci. U.S.A.">
        <title>Complete genomic sequence of Pasteurella multocida Pm70.</title>
        <authorList>
            <person name="May B.J."/>
            <person name="Zhang Q."/>
            <person name="Li L.L."/>
            <person name="Paustian M.L."/>
            <person name="Whittam T.S."/>
            <person name="Kapur V."/>
        </authorList>
    </citation>
    <scope>NUCLEOTIDE SEQUENCE [LARGE SCALE GENOMIC DNA]</scope>
    <source>
        <strain>Pm70</strain>
    </source>
</reference>
<protein>
    <recommendedName>
        <fullName evidence="1">Histidinol dehydrogenase</fullName>
        <shortName evidence="1">HDH</shortName>
        <ecNumber evidence="1">1.1.1.23</ecNumber>
    </recommendedName>
</protein>
<feature type="chain" id="PRO_0000135808" description="Histidinol dehydrogenase">
    <location>
        <begin position="1"/>
        <end position="428"/>
    </location>
</feature>
<feature type="active site" description="Proton acceptor" evidence="1">
    <location>
        <position position="321"/>
    </location>
</feature>
<feature type="active site" description="Proton acceptor" evidence="1">
    <location>
        <position position="322"/>
    </location>
</feature>
<feature type="binding site" evidence="1">
    <location>
        <position position="127"/>
    </location>
    <ligand>
        <name>NAD(+)</name>
        <dbReference type="ChEBI" id="CHEBI:57540"/>
    </ligand>
</feature>
<feature type="binding site" evidence="1">
    <location>
        <position position="185"/>
    </location>
    <ligand>
        <name>NAD(+)</name>
        <dbReference type="ChEBI" id="CHEBI:57540"/>
    </ligand>
</feature>
<feature type="binding site" evidence="1">
    <location>
        <position position="208"/>
    </location>
    <ligand>
        <name>NAD(+)</name>
        <dbReference type="ChEBI" id="CHEBI:57540"/>
    </ligand>
</feature>
<feature type="binding site" evidence="1">
    <location>
        <position position="232"/>
    </location>
    <ligand>
        <name>substrate</name>
    </ligand>
</feature>
<feature type="binding site" evidence="1">
    <location>
        <position position="254"/>
    </location>
    <ligand>
        <name>substrate</name>
    </ligand>
</feature>
<feature type="binding site" evidence="1">
    <location>
        <position position="254"/>
    </location>
    <ligand>
        <name>Zn(2+)</name>
        <dbReference type="ChEBI" id="CHEBI:29105"/>
    </ligand>
</feature>
<feature type="binding site" evidence="1">
    <location>
        <position position="257"/>
    </location>
    <ligand>
        <name>substrate</name>
    </ligand>
</feature>
<feature type="binding site" evidence="1">
    <location>
        <position position="257"/>
    </location>
    <ligand>
        <name>Zn(2+)</name>
        <dbReference type="ChEBI" id="CHEBI:29105"/>
    </ligand>
</feature>
<feature type="binding site" evidence="1">
    <location>
        <position position="322"/>
    </location>
    <ligand>
        <name>substrate</name>
    </ligand>
</feature>
<feature type="binding site" evidence="1">
    <location>
        <position position="355"/>
    </location>
    <ligand>
        <name>substrate</name>
    </ligand>
</feature>
<feature type="binding site" evidence="1">
    <location>
        <position position="355"/>
    </location>
    <ligand>
        <name>Zn(2+)</name>
        <dbReference type="ChEBI" id="CHEBI:29105"/>
    </ligand>
</feature>
<feature type="binding site" evidence="1">
    <location>
        <position position="409"/>
    </location>
    <ligand>
        <name>substrate</name>
    </ligand>
</feature>
<feature type="binding site" evidence="1">
    <location>
        <position position="414"/>
    </location>
    <ligand>
        <name>substrate</name>
    </ligand>
</feature>
<feature type="binding site" evidence="1">
    <location>
        <position position="414"/>
    </location>
    <ligand>
        <name>Zn(2+)</name>
        <dbReference type="ChEBI" id="CHEBI:29105"/>
    </ligand>
</feature>
<dbReference type="EC" id="1.1.1.23" evidence="1"/>
<dbReference type="EMBL" id="AE004439">
    <property type="protein sequence ID" value="AAK03282.1"/>
    <property type="molecule type" value="Genomic_DNA"/>
</dbReference>
<dbReference type="RefSeq" id="WP_010907065.1">
    <property type="nucleotide sequence ID" value="NC_002663.1"/>
</dbReference>
<dbReference type="SMR" id="Q9CLM4"/>
<dbReference type="STRING" id="272843.PM1198"/>
<dbReference type="EnsemblBacteria" id="AAK03282">
    <property type="protein sequence ID" value="AAK03282"/>
    <property type="gene ID" value="PM1198"/>
</dbReference>
<dbReference type="KEGG" id="pmu:PM1198"/>
<dbReference type="PATRIC" id="fig|272843.6.peg.1209"/>
<dbReference type="HOGENOM" id="CLU_006732_3_0_6"/>
<dbReference type="OrthoDB" id="9805269at2"/>
<dbReference type="UniPathway" id="UPA00031">
    <property type="reaction ID" value="UER00014"/>
</dbReference>
<dbReference type="Proteomes" id="UP000000809">
    <property type="component" value="Chromosome"/>
</dbReference>
<dbReference type="GO" id="GO:0005829">
    <property type="term" value="C:cytosol"/>
    <property type="evidence" value="ECO:0007669"/>
    <property type="project" value="TreeGrafter"/>
</dbReference>
<dbReference type="GO" id="GO:0004399">
    <property type="term" value="F:histidinol dehydrogenase activity"/>
    <property type="evidence" value="ECO:0007669"/>
    <property type="project" value="UniProtKB-UniRule"/>
</dbReference>
<dbReference type="GO" id="GO:0051287">
    <property type="term" value="F:NAD binding"/>
    <property type="evidence" value="ECO:0007669"/>
    <property type="project" value="InterPro"/>
</dbReference>
<dbReference type="GO" id="GO:0008270">
    <property type="term" value="F:zinc ion binding"/>
    <property type="evidence" value="ECO:0007669"/>
    <property type="project" value="UniProtKB-UniRule"/>
</dbReference>
<dbReference type="GO" id="GO:0000105">
    <property type="term" value="P:L-histidine biosynthetic process"/>
    <property type="evidence" value="ECO:0007669"/>
    <property type="project" value="UniProtKB-UniRule"/>
</dbReference>
<dbReference type="CDD" id="cd06572">
    <property type="entry name" value="Histidinol_dh"/>
    <property type="match status" value="1"/>
</dbReference>
<dbReference type="FunFam" id="1.20.5.1300:FF:000001">
    <property type="entry name" value="Histidine biosynthesis trifunctional protein"/>
    <property type="match status" value="1"/>
</dbReference>
<dbReference type="FunFam" id="3.40.50.1980:FF:000001">
    <property type="entry name" value="Histidinol dehydrogenase"/>
    <property type="match status" value="1"/>
</dbReference>
<dbReference type="FunFam" id="3.40.50.1980:FF:000002">
    <property type="entry name" value="Histidinol dehydrogenase, chloroplastic"/>
    <property type="match status" value="1"/>
</dbReference>
<dbReference type="Gene3D" id="1.20.5.1300">
    <property type="match status" value="1"/>
</dbReference>
<dbReference type="Gene3D" id="3.40.50.1980">
    <property type="entry name" value="Nitrogenase molybdenum iron protein domain"/>
    <property type="match status" value="2"/>
</dbReference>
<dbReference type="HAMAP" id="MF_01024">
    <property type="entry name" value="HisD"/>
    <property type="match status" value="1"/>
</dbReference>
<dbReference type="InterPro" id="IPR016161">
    <property type="entry name" value="Ald_DH/histidinol_DH"/>
</dbReference>
<dbReference type="InterPro" id="IPR001692">
    <property type="entry name" value="Histidinol_DH_CS"/>
</dbReference>
<dbReference type="InterPro" id="IPR022695">
    <property type="entry name" value="Histidinol_DH_monofunct"/>
</dbReference>
<dbReference type="InterPro" id="IPR012131">
    <property type="entry name" value="Hstdl_DH"/>
</dbReference>
<dbReference type="NCBIfam" id="TIGR00069">
    <property type="entry name" value="hisD"/>
    <property type="match status" value="1"/>
</dbReference>
<dbReference type="PANTHER" id="PTHR21256:SF2">
    <property type="entry name" value="HISTIDINE BIOSYNTHESIS TRIFUNCTIONAL PROTEIN"/>
    <property type="match status" value="1"/>
</dbReference>
<dbReference type="PANTHER" id="PTHR21256">
    <property type="entry name" value="HISTIDINOL DEHYDROGENASE HDH"/>
    <property type="match status" value="1"/>
</dbReference>
<dbReference type="Pfam" id="PF00815">
    <property type="entry name" value="Histidinol_dh"/>
    <property type="match status" value="1"/>
</dbReference>
<dbReference type="PIRSF" id="PIRSF000099">
    <property type="entry name" value="Histidinol_dh"/>
    <property type="match status" value="1"/>
</dbReference>
<dbReference type="PRINTS" id="PR00083">
    <property type="entry name" value="HOLDHDRGNASE"/>
</dbReference>
<dbReference type="SUPFAM" id="SSF53720">
    <property type="entry name" value="ALDH-like"/>
    <property type="match status" value="1"/>
</dbReference>
<dbReference type="PROSITE" id="PS00611">
    <property type="entry name" value="HISOL_DEHYDROGENASE"/>
    <property type="match status" value="1"/>
</dbReference>
<keyword id="KW-0028">Amino-acid biosynthesis</keyword>
<keyword id="KW-0368">Histidine biosynthesis</keyword>
<keyword id="KW-0479">Metal-binding</keyword>
<keyword id="KW-0520">NAD</keyword>
<keyword id="KW-0560">Oxidoreductase</keyword>
<keyword id="KW-1185">Reference proteome</keyword>
<keyword id="KW-0862">Zinc</keyword>
<evidence type="ECO:0000255" key="1">
    <source>
        <dbReference type="HAMAP-Rule" id="MF_01024"/>
    </source>
</evidence>
<proteinExistence type="inferred from homology"/>
<sequence length="428" mass="46150">MQTLIWNTLNSAQKQAALSRPAQAVGEQITQAVNAIKSNVINNGDKALFELAEKFDKTTLESLVISKAQVEQASQRIATELKQAIQTAKGNIERFHQAQKNQTVDLETQAGVRCQVVTRPIQNVGLYIPGGSAPLFSTVLMLAVPAKIAGCKTIVLCSPPPIADEILYTANLCGVETIYAIGGAQAIFAMANGTESVQKVDKIFGPGNAFVTEAKRQVLQQGTAIDMPAGPSEVLVIADEFADPDFVASDLLSQAEHGSDSQVILVTNCETLAKQTALSIEQQLARLPRAETARKALAHSRTFIAEDLQQCVEISNAYAPEHLVVQVENARNLLPFLDNAGSIFLGAYSPESMGDYASGTNHVLPTYGYTRTHSSLGLADFSKRMTVQELTPQGFKDLANTVMLMAEAEQLEAHKQAVAIRLEKLTQE</sequence>